<keyword id="KW-0227">DNA damage</keyword>
<keyword id="KW-0234">DNA repair</keyword>
<keyword id="KW-0238">DNA-binding</keyword>
<keyword id="KW-0326">Glycosidase</keyword>
<keyword id="KW-0378">Hydrolase</keyword>
<keyword id="KW-0456">Lyase</keyword>
<keyword id="KW-0479">Metal-binding</keyword>
<keyword id="KW-0511">Multifunctional enzyme</keyword>
<keyword id="KW-0862">Zinc</keyword>
<keyword id="KW-0863">Zinc-finger</keyword>
<sequence>MPELPEVETTRRGIAPHLEGQRVSRVVVRERRLRWPIPEDLDVRLSGQRIVLVERRAKYLLINAEVGTLISHLGMSGNLRLVEVGLPAAKHEHVDIELESGMALRYTDPRRFGAMLWSQDPHNHELLLRLGPEPLTELFDGDRLFQLSRGKSMAVKPFIMDNAVVVGVGNIYATEALFAAGIDPRRAAGGISRGRYLKLAIEIKRVLAAAIERGGTTLRDFIGGDGQPGYFQQELFVYGRGGEACKVCGTELRNVVLGQRASVFCPRCQR</sequence>
<accession>C3K3N6</accession>
<evidence type="ECO:0000250" key="1"/>
<evidence type="ECO:0000255" key="2">
    <source>
        <dbReference type="HAMAP-Rule" id="MF_00103"/>
    </source>
</evidence>
<organism>
    <name type="scientific">Pseudomonas fluorescens (strain SBW25)</name>
    <dbReference type="NCBI Taxonomy" id="216595"/>
    <lineage>
        <taxon>Bacteria</taxon>
        <taxon>Pseudomonadati</taxon>
        <taxon>Pseudomonadota</taxon>
        <taxon>Gammaproteobacteria</taxon>
        <taxon>Pseudomonadales</taxon>
        <taxon>Pseudomonadaceae</taxon>
        <taxon>Pseudomonas</taxon>
    </lineage>
</organism>
<dbReference type="EC" id="3.2.2.23" evidence="2"/>
<dbReference type="EC" id="4.2.99.18" evidence="2"/>
<dbReference type="EMBL" id="AM181176">
    <property type="protein sequence ID" value="CAY53194.1"/>
    <property type="molecule type" value="Genomic_DNA"/>
</dbReference>
<dbReference type="RefSeq" id="WP_015886368.1">
    <property type="nucleotide sequence ID" value="NC_012660.1"/>
</dbReference>
<dbReference type="SMR" id="C3K3N6"/>
<dbReference type="STRING" id="294.SRM1_05446"/>
<dbReference type="PATRIC" id="fig|216595.4.peg.5914"/>
<dbReference type="eggNOG" id="COG0266">
    <property type="taxonomic scope" value="Bacteria"/>
</dbReference>
<dbReference type="HOGENOM" id="CLU_038423_1_1_6"/>
<dbReference type="OrthoDB" id="9800855at2"/>
<dbReference type="GO" id="GO:0034039">
    <property type="term" value="F:8-oxo-7,8-dihydroguanine DNA N-glycosylase activity"/>
    <property type="evidence" value="ECO:0007669"/>
    <property type="project" value="TreeGrafter"/>
</dbReference>
<dbReference type="GO" id="GO:0140078">
    <property type="term" value="F:class I DNA-(apurinic or apyrimidinic site) endonuclease activity"/>
    <property type="evidence" value="ECO:0007669"/>
    <property type="project" value="UniProtKB-EC"/>
</dbReference>
<dbReference type="GO" id="GO:0003684">
    <property type="term" value="F:damaged DNA binding"/>
    <property type="evidence" value="ECO:0007669"/>
    <property type="project" value="InterPro"/>
</dbReference>
<dbReference type="GO" id="GO:0008270">
    <property type="term" value="F:zinc ion binding"/>
    <property type="evidence" value="ECO:0007669"/>
    <property type="project" value="UniProtKB-UniRule"/>
</dbReference>
<dbReference type="GO" id="GO:0006284">
    <property type="term" value="P:base-excision repair"/>
    <property type="evidence" value="ECO:0007669"/>
    <property type="project" value="InterPro"/>
</dbReference>
<dbReference type="CDD" id="cd08966">
    <property type="entry name" value="EcFpg-like_N"/>
    <property type="match status" value="1"/>
</dbReference>
<dbReference type="FunFam" id="1.10.8.50:FF:000003">
    <property type="entry name" value="Formamidopyrimidine-DNA glycosylase"/>
    <property type="match status" value="1"/>
</dbReference>
<dbReference type="FunFam" id="3.20.190.10:FF:000001">
    <property type="entry name" value="Formamidopyrimidine-DNA glycosylase"/>
    <property type="match status" value="1"/>
</dbReference>
<dbReference type="Gene3D" id="1.10.8.50">
    <property type="match status" value="1"/>
</dbReference>
<dbReference type="Gene3D" id="3.20.190.10">
    <property type="entry name" value="MutM-like, N-terminal"/>
    <property type="match status" value="1"/>
</dbReference>
<dbReference type="HAMAP" id="MF_00103">
    <property type="entry name" value="Fapy_DNA_glycosyl"/>
    <property type="match status" value="1"/>
</dbReference>
<dbReference type="InterPro" id="IPR015886">
    <property type="entry name" value="DNA_glyclase/AP_lyase_DNA-bd"/>
</dbReference>
<dbReference type="InterPro" id="IPR015887">
    <property type="entry name" value="DNA_glyclase_Znf_dom_DNA_BS"/>
</dbReference>
<dbReference type="InterPro" id="IPR020629">
    <property type="entry name" value="Formamido-pyr_DNA_Glyclase"/>
</dbReference>
<dbReference type="InterPro" id="IPR012319">
    <property type="entry name" value="FPG_cat"/>
</dbReference>
<dbReference type="InterPro" id="IPR035937">
    <property type="entry name" value="MutM-like_N-ter"/>
</dbReference>
<dbReference type="InterPro" id="IPR010979">
    <property type="entry name" value="Ribosomal_uS13-like_H2TH"/>
</dbReference>
<dbReference type="InterPro" id="IPR000214">
    <property type="entry name" value="Znf_DNA_glyclase/AP_lyase"/>
</dbReference>
<dbReference type="InterPro" id="IPR010663">
    <property type="entry name" value="Znf_FPG/IleRS"/>
</dbReference>
<dbReference type="NCBIfam" id="TIGR00577">
    <property type="entry name" value="fpg"/>
    <property type="match status" value="1"/>
</dbReference>
<dbReference type="NCBIfam" id="NF002211">
    <property type="entry name" value="PRK01103.1"/>
    <property type="match status" value="1"/>
</dbReference>
<dbReference type="PANTHER" id="PTHR22993">
    <property type="entry name" value="FORMAMIDOPYRIMIDINE-DNA GLYCOSYLASE"/>
    <property type="match status" value="1"/>
</dbReference>
<dbReference type="PANTHER" id="PTHR22993:SF9">
    <property type="entry name" value="FORMAMIDOPYRIMIDINE-DNA GLYCOSYLASE"/>
    <property type="match status" value="1"/>
</dbReference>
<dbReference type="Pfam" id="PF01149">
    <property type="entry name" value="Fapy_DNA_glyco"/>
    <property type="match status" value="1"/>
</dbReference>
<dbReference type="Pfam" id="PF06831">
    <property type="entry name" value="H2TH"/>
    <property type="match status" value="1"/>
</dbReference>
<dbReference type="Pfam" id="PF06827">
    <property type="entry name" value="zf-FPG_IleRS"/>
    <property type="match status" value="1"/>
</dbReference>
<dbReference type="SMART" id="SM00898">
    <property type="entry name" value="Fapy_DNA_glyco"/>
    <property type="match status" value="1"/>
</dbReference>
<dbReference type="SMART" id="SM01232">
    <property type="entry name" value="H2TH"/>
    <property type="match status" value="1"/>
</dbReference>
<dbReference type="SUPFAM" id="SSF57716">
    <property type="entry name" value="Glucocorticoid receptor-like (DNA-binding domain)"/>
    <property type="match status" value="1"/>
</dbReference>
<dbReference type="SUPFAM" id="SSF81624">
    <property type="entry name" value="N-terminal domain of MutM-like DNA repair proteins"/>
    <property type="match status" value="1"/>
</dbReference>
<dbReference type="SUPFAM" id="SSF46946">
    <property type="entry name" value="S13-like H2TH domain"/>
    <property type="match status" value="1"/>
</dbReference>
<dbReference type="PROSITE" id="PS51068">
    <property type="entry name" value="FPG_CAT"/>
    <property type="match status" value="1"/>
</dbReference>
<dbReference type="PROSITE" id="PS01242">
    <property type="entry name" value="ZF_FPG_1"/>
    <property type="match status" value="1"/>
</dbReference>
<dbReference type="PROSITE" id="PS51066">
    <property type="entry name" value="ZF_FPG_2"/>
    <property type="match status" value="1"/>
</dbReference>
<protein>
    <recommendedName>
        <fullName evidence="2">Formamidopyrimidine-DNA glycosylase</fullName>
        <shortName evidence="2">Fapy-DNA glycosylase</shortName>
        <ecNumber evidence="2">3.2.2.23</ecNumber>
    </recommendedName>
    <alternativeName>
        <fullName evidence="2">DNA-(apurinic or apyrimidinic site) lyase MutM</fullName>
        <shortName evidence="2">AP lyase MutM</shortName>
        <ecNumber evidence="2">4.2.99.18</ecNumber>
    </alternativeName>
</protein>
<feature type="initiator methionine" description="Removed" evidence="1">
    <location>
        <position position="1"/>
    </location>
</feature>
<feature type="chain" id="PRO_1000202827" description="Formamidopyrimidine-DNA glycosylase">
    <location>
        <begin position="2"/>
        <end position="270"/>
    </location>
</feature>
<feature type="zinc finger region" description="FPG-type" evidence="2">
    <location>
        <begin position="236"/>
        <end position="270"/>
    </location>
</feature>
<feature type="active site" description="Schiff-base intermediate with DNA" evidence="2">
    <location>
        <position position="2"/>
    </location>
</feature>
<feature type="active site" description="Proton donor" evidence="2">
    <location>
        <position position="3"/>
    </location>
</feature>
<feature type="active site" description="Proton donor; for beta-elimination activity" evidence="2">
    <location>
        <position position="58"/>
    </location>
</feature>
<feature type="active site" description="Proton donor; for delta-elimination activity" evidence="2">
    <location>
        <position position="260"/>
    </location>
</feature>
<feature type="binding site" evidence="2">
    <location>
        <position position="91"/>
    </location>
    <ligand>
        <name>DNA</name>
        <dbReference type="ChEBI" id="CHEBI:16991"/>
    </ligand>
</feature>
<feature type="binding site" evidence="2">
    <location>
        <position position="110"/>
    </location>
    <ligand>
        <name>DNA</name>
        <dbReference type="ChEBI" id="CHEBI:16991"/>
    </ligand>
</feature>
<feature type="binding site" evidence="2">
    <location>
        <position position="151"/>
    </location>
    <ligand>
        <name>DNA</name>
        <dbReference type="ChEBI" id="CHEBI:16991"/>
    </ligand>
</feature>
<name>FPG_PSEFS</name>
<reference key="1">
    <citation type="journal article" date="2009" name="Genome Biol.">
        <title>Genomic and genetic analyses of diversity and plant interactions of Pseudomonas fluorescens.</title>
        <authorList>
            <person name="Silby M.W."/>
            <person name="Cerdeno-Tarraga A.M."/>
            <person name="Vernikos G.S."/>
            <person name="Giddens S.R."/>
            <person name="Jackson R.W."/>
            <person name="Preston G.M."/>
            <person name="Zhang X.-X."/>
            <person name="Moon C.D."/>
            <person name="Gehrig S.M."/>
            <person name="Godfrey S.A.C."/>
            <person name="Knight C.G."/>
            <person name="Malone J.G."/>
            <person name="Robinson Z."/>
            <person name="Spiers A.J."/>
            <person name="Harris S."/>
            <person name="Challis G.L."/>
            <person name="Yaxley A.M."/>
            <person name="Harris D."/>
            <person name="Seeger K."/>
            <person name="Murphy L."/>
            <person name="Rutter S."/>
            <person name="Squares R."/>
            <person name="Quail M.A."/>
            <person name="Saunders E."/>
            <person name="Mavromatis K."/>
            <person name="Brettin T.S."/>
            <person name="Bentley S.D."/>
            <person name="Hothersall J."/>
            <person name="Stephens E."/>
            <person name="Thomas C.M."/>
            <person name="Parkhill J."/>
            <person name="Levy S.B."/>
            <person name="Rainey P.B."/>
            <person name="Thomson N.R."/>
        </authorList>
    </citation>
    <scope>NUCLEOTIDE SEQUENCE [LARGE SCALE GENOMIC DNA]</scope>
    <source>
        <strain>SBW25</strain>
    </source>
</reference>
<proteinExistence type="inferred from homology"/>
<comment type="function">
    <text evidence="2">Involved in base excision repair of DNA damaged by oxidation or by mutagenic agents. Acts as a DNA glycosylase that recognizes and removes damaged bases. Has a preference for oxidized purines, such as 7,8-dihydro-8-oxoguanine (8-oxoG). Has AP (apurinic/apyrimidinic) lyase activity and introduces nicks in the DNA strand. Cleaves the DNA backbone by beta-delta elimination to generate a single-strand break at the site of the removed base with both 3'- and 5'-phosphates.</text>
</comment>
<comment type="catalytic activity">
    <reaction evidence="2">
        <text>Hydrolysis of DNA containing ring-opened 7-methylguanine residues, releasing 2,6-diamino-4-hydroxy-5-(N-methyl)formamidopyrimidine.</text>
        <dbReference type="EC" id="3.2.2.23"/>
    </reaction>
</comment>
<comment type="catalytic activity">
    <reaction evidence="2">
        <text>2'-deoxyribonucleotide-(2'-deoxyribose 5'-phosphate)-2'-deoxyribonucleotide-DNA = a 3'-end 2'-deoxyribonucleotide-(2,3-dehydro-2,3-deoxyribose 5'-phosphate)-DNA + a 5'-end 5'-phospho-2'-deoxyribonucleoside-DNA + H(+)</text>
        <dbReference type="Rhea" id="RHEA:66592"/>
        <dbReference type="Rhea" id="RHEA-COMP:13180"/>
        <dbReference type="Rhea" id="RHEA-COMP:16897"/>
        <dbReference type="Rhea" id="RHEA-COMP:17067"/>
        <dbReference type="ChEBI" id="CHEBI:15378"/>
        <dbReference type="ChEBI" id="CHEBI:136412"/>
        <dbReference type="ChEBI" id="CHEBI:157695"/>
        <dbReference type="ChEBI" id="CHEBI:167181"/>
        <dbReference type="EC" id="4.2.99.18"/>
    </reaction>
</comment>
<comment type="cofactor">
    <cofactor evidence="2">
        <name>Zn(2+)</name>
        <dbReference type="ChEBI" id="CHEBI:29105"/>
    </cofactor>
    <text evidence="2">Binds 1 zinc ion per subunit.</text>
</comment>
<comment type="subunit">
    <text evidence="2">Monomer.</text>
</comment>
<comment type="similarity">
    <text evidence="2">Belongs to the FPG family.</text>
</comment>
<gene>
    <name evidence="2" type="primary">mutM</name>
    <name evidence="2" type="synonym">fpg</name>
    <name type="ordered locus">PFLU_5793</name>
</gene>